<gene>
    <name type="primary">nifJ</name>
</gene>
<reference key="1">
    <citation type="journal article" date="1988" name="J. Mol. Biol.">
        <title>Nucleotide sequence of a 24,206-base-pair DNA fragment carrying the entire nitrogen fixation gene cluster of Klebsiella pneumoniae.</title>
        <authorList>
            <person name="Arnold W."/>
            <person name="Rump A."/>
            <person name="Klipp W."/>
            <person name="Priefer U.B."/>
            <person name="Puehler A."/>
        </authorList>
    </citation>
    <scope>NUCLEOTIDE SEQUENCE [GENOMIC DNA]</scope>
</reference>
<reference key="2">
    <citation type="journal article" date="1988" name="Nucleic Acids Res.">
        <title>The nucleotide sequence of the nifJ gene of Klebsiella pneumoniae.</title>
        <authorList>
            <person name="Cannon M."/>
            <person name="Cannon F."/>
            <person name="Buchanan-Wollaston V."/>
            <person name="Alley D."/>
            <person name="Alley A."/>
            <person name="Beynon J."/>
        </authorList>
    </citation>
    <scope>NUCLEOTIDE SEQUENCE [GENOMIC DNA]</scope>
</reference>
<reference key="3">
    <citation type="journal article" date="1993" name="Mol. Microbiol.">
        <title>The Klebsiella pneumoniae nifJ promoter: analysis of promoter elements regulating activation by the NifA promoter.</title>
        <authorList>
            <person name="Charlton W."/>
            <person name="Cannon W."/>
            <person name="Buck M."/>
        </authorList>
    </citation>
    <scope>NUCLEOTIDE SEQUENCE [GENOMIC DNA]</scope>
    <scope>SEQUENCE REVISION</scope>
</reference>
<reference key="4">
    <citation type="journal article" date="1983" name="Nucleic Acids Res.">
        <title>An open reading frame upstream from the nifH gene of Klebsiella pneumoniae.</title>
        <authorList>
            <person name="Shen S."/>
            <person name="Xue Z."/>
            <person name="Kong Q."/>
            <person name="Wu Q."/>
        </authorList>
    </citation>
    <scope>NUCLEOTIDE SEQUENCE [GENOMIC DNA] OF 1-127</scope>
</reference>
<keyword id="KW-0004">4Fe-4S</keyword>
<keyword id="KW-0249">Electron transport</keyword>
<keyword id="KW-0408">Iron</keyword>
<keyword id="KW-0411">Iron-sulfur</keyword>
<keyword id="KW-0479">Metal-binding</keyword>
<keyword id="KW-0535">Nitrogen fixation</keyword>
<keyword id="KW-0560">Oxidoreductase</keyword>
<keyword id="KW-0677">Repeat</keyword>
<keyword id="KW-0813">Transport</keyword>
<name>NIFJ_KLEPN</name>
<evidence type="ECO:0000250" key="1">
    <source>
        <dbReference type="UniProtKB" id="P94692"/>
    </source>
</evidence>
<evidence type="ECO:0000255" key="2">
    <source>
        <dbReference type="PROSITE-ProRule" id="PRU00711"/>
    </source>
</evidence>
<evidence type="ECO:0000305" key="3"/>
<dbReference type="EC" id="1.2.7.-"/>
<dbReference type="EMBL" id="X01007">
    <property type="protein sequence ID" value="CAA25502.1"/>
    <property type="molecule type" value="Genomic_DNA"/>
</dbReference>
<dbReference type="EMBL" id="X13303">
    <property type="protein sequence ID" value="CAA31665.1"/>
    <property type="molecule type" value="Genomic_DNA"/>
</dbReference>
<dbReference type="EMBL" id="X13109">
    <property type="protein sequence ID" value="CAA31501.1"/>
    <property type="molecule type" value="Genomic_DNA"/>
</dbReference>
<dbReference type="PIR" id="S01997">
    <property type="entry name" value="QQKBFP"/>
</dbReference>
<dbReference type="SMR" id="P03833"/>
<dbReference type="BioCyc" id="MetaCyc:NIFJKLEB-MONOMER"/>
<dbReference type="GO" id="GO:0051539">
    <property type="term" value="F:4 iron, 4 sulfur cluster binding"/>
    <property type="evidence" value="ECO:0007669"/>
    <property type="project" value="UniProtKB-KW"/>
</dbReference>
<dbReference type="GO" id="GO:0005506">
    <property type="term" value="F:iron ion binding"/>
    <property type="evidence" value="ECO:0007669"/>
    <property type="project" value="InterPro"/>
</dbReference>
<dbReference type="GO" id="GO:0043873">
    <property type="term" value="F:pyruvate-flavodoxin oxidoreductase activity"/>
    <property type="evidence" value="ECO:0007669"/>
    <property type="project" value="RHEA"/>
</dbReference>
<dbReference type="GO" id="GO:0030976">
    <property type="term" value="F:thiamine pyrophosphate binding"/>
    <property type="evidence" value="ECO:0007669"/>
    <property type="project" value="InterPro"/>
</dbReference>
<dbReference type="GO" id="GO:0022900">
    <property type="term" value="P:electron transport chain"/>
    <property type="evidence" value="ECO:0007669"/>
    <property type="project" value="InterPro"/>
</dbReference>
<dbReference type="GO" id="GO:0009399">
    <property type="term" value="P:nitrogen fixation"/>
    <property type="evidence" value="ECO:0007669"/>
    <property type="project" value="UniProtKB-KW"/>
</dbReference>
<dbReference type="GO" id="GO:0006979">
    <property type="term" value="P:response to oxidative stress"/>
    <property type="evidence" value="ECO:0007669"/>
    <property type="project" value="TreeGrafter"/>
</dbReference>
<dbReference type="GO" id="GO:0044281">
    <property type="term" value="P:small molecule metabolic process"/>
    <property type="evidence" value="ECO:0007669"/>
    <property type="project" value="UniProtKB-ARBA"/>
</dbReference>
<dbReference type="CDD" id="cd03377">
    <property type="entry name" value="TPP_PFOR_PNO"/>
    <property type="match status" value="1"/>
</dbReference>
<dbReference type="CDD" id="cd07034">
    <property type="entry name" value="TPP_PYR_PFOR_IOR-alpha_like"/>
    <property type="match status" value="1"/>
</dbReference>
<dbReference type="FunFam" id="3.30.70.20:FF:000022">
    <property type="entry name" value="Pyruvate:ferredoxin (Flavodoxin) oxidoreductase"/>
    <property type="match status" value="1"/>
</dbReference>
<dbReference type="FunFam" id="3.40.50.920:FF:000007">
    <property type="entry name" value="Pyruvate:ferredoxin (Flavodoxin) oxidoreductase"/>
    <property type="match status" value="1"/>
</dbReference>
<dbReference type="FunFam" id="3.40.50.970:FF:000012">
    <property type="entry name" value="Pyruvate:ferredoxin (Flavodoxin) oxidoreductase"/>
    <property type="match status" value="1"/>
</dbReference>
<dbReference type="FunFam" id="3.40.50.970:FF:000041">
    <property type="entry name" value="Pyruvate:ferredoxin (Flavodoxin) oxidoreductase"/>
    <property type="match status" value="1"/>
</dbReference>
<dbReference type="FunFam" id="3.40.920.10:FF:000001">
    <property type="entry name" value="Pyruvate:ferredoxin (Flavodoxin) oxidoreductase"/>
    <property type="match status" value="1"/>
</dbReference>
<dbReference type="Gene3D" id="3.30.70.20">
    <property type="match status" value="1"/>
</dbReference>
<dbReference type="Gene3D" id="3.40.50.920">
    <property type="match status" value="1"/>
</dbReference>
<dbReference type="Gene3D" id="3.40.50.970">
    <property type="match status" value="2"/>
</dbReference>
<dbReference type="Gene3D" id="3.40.920.10">
    <property type="entry name" value="Pyruvate-ferredoxin oxidoreductase, PFOR, domain III"/>
    <property type="match status" value="1"/>
</dbReference>
<dbReference type="Gene3D" id="4.10.780.10">
    <property type="entry name" value="Pyruvate-flavodoxin oxidoreductase, EKR domain"/>
    <property type="match status" value="1"/>
</dbReference>
<dbReference type="InterPro" id="IPR017896">
    <property type="entry name" value="4Fe4S_Fe-S-bd"/>
</dbReference>
<dbReference type="InterPro" id="IPR017900">
    <property type="entry name" value="4Fe4S_Fe_S_CS"/>
</dbReference>
<dbReference type="InterPro" id="IPR033412">
    <property type="entry name" value="PFOR_II"/>
</dbReference>
<dbReference type="InterPro" id="IPR050722">
    <property type="entry name" value="Pyruvate:ferred/Flavod_OxRd"/>
</dbReference>
<dbReference type="InterPro" id="IPR037112">
    <property type="entry name" value="Pyrv-flavodox_OxR_EKR_sf"/>
</dbReference>
<dbReference type="InterPro" id="IPR019456">
    <property type="entry name" value="Pyrv-flavodox_OxRtase_EKR"/>
</dbReference>
<dbReference type="InterPro" id="IPR019752">
    <property type="entry name" value="Pyrv/ketoisovalerate_OxRed_cat"/>
</dbReference>
<dbReference type="InterPro" id="IPR002880">
    <property type="entry name" value="Pyrv_Fd/Flavodoxin_OxRdtase_N"/>
</dbReference>
<dbReference type="InterPro" id="IPR011895">
    <property type="entry name" value="Pyrv_flavodox_OxRed"/>
</dbReference>
<dbReference type="InterPro" id="IPR002869">
    <property type="entry name" value="Pyrv_flavodox_OxRed_cen"/>
</dbReference>
<dbReference type="InterPro" id="IPR029061">
    <property type="entry name" value="THDP-binding"/>
</dbReference>
<dbReference type="InterPro" id="IPR011766">
    <property type="entry name" value="TPP_enzyme_TPP-bd"/>
</dbReference>
<dbReference type="InterPro" id="IPR009014">
    <property type="entry name" value="Transketo_C/PFOR_II"/>
</dbReference>
<dbReference type="NCBIfam" id="TIGR02176">
    <property type="entry name" value="pyruv_ox_red"/>
    <property type="match status" value="1"/>
</dbReference>
<dbReference type="PANTHER" id="PTHR32154">
    <property type="entry name" value="PYRUVATE-FLAVODOXIN OXIDOREDUCTASE-RELATED"/>
    <property type="match status" value="1"/>
</dbReference>
<dbReference type="PANTHER" id="PTHR32154:SF0">
    <property type="entry name" value="PYRUVATE-FLAVODOXIN OXIDOREDUCTASE-RELATED"/>
    <property type="match status" value="1"/>
</dbReference>
<dbReference type="Pfam" id="PF10371">
    <property type="entry name" value="EKR"/>
    <property type="match status" value="1"/>
</dbReference>
<dbReference type="Pfam" id="PF12838">
    <property type="entry name" value="Fer4_7"/>
    <property type="match status" value="1"/>
</dbReference>
<dbReference type="Pfam" id="PF17147">
    <property type="entry name" value="PFOR_II"/>
    <property type="match status" value="1"/>
</dbReference>
<dbReference type="Pfam" id="PF01558">
    <property type="entry name" value="POR"/>
    <property type="match status" value="1"/>
</dbReference>
<dbReference type="Pfam" id="PF01855">
    <property type="entry name" value="POR_N"/>
    <property type="match status" value="1"/>
</dbReference>
<dbReference type="Pfam" id="PF02775">
    <property type="entry name" value="TPP_enzyme_C"/>
    <property type="match status" value="1"/>
</dbReference>
<dbReference type="PIRSF" id="PIRSF000159">
    <property type="entry name" value="NifJ"/>
    <property type="match status" value="1"/>
</dbReference>
<dbReference type="SMART" id="SM00890">
    <property type="entry name" value="EKR"/>
    <property type="match status" value="1"/>
</dbReference>
<dbReference type="SUPFAM" id="SSF54862">
    <property type="entry name" value="4Fe-4S ferredoxins"/>
    <property type="match status" value="1"/>
</dbReference>
<dbReference type="SUPFAM" id="SSF53323">
    <property type="entry name" value="Pyruvate-ferredoxin oxidoreductase, PFOR, domain III"/>
    <property type="match status" value="1"/>
</dbReference>
<dbReference type="SUPFAM" id="SSF52518">
    <property type="entry name" value="Thiamin diphosphate-binding fold (THDP-binding)"/>
    <property type="match status" value="2"/>
</dbReference>
<dbReference type="SUPFAM" id="SSF52922">
    <property type="entry name" value="TK C-terminal domain-like"/>
    <property type="match status" value="1"/>
</dbReference>
<dbReference type="PROSITE" id="PS00198">
    <property type="entry name" value="4FE4S_FER_1"/>
    <property type="match status" value="2"/>
</dbReference>
<dbReference type="PROSITE" id="PS51379">
    <property type="entry name" value="4FE4S_FER_2"/>
    <property type="match status" value="2"/>
</dbReference>
<protein>
    <recommendedName>
        <fullName>Pyruvate-flavodoxin oxidoreductase</fullName>
        <ecNumber>1.2.7.-</ecNumber>
    </recommendedName>
</protein>
<feature type="chain" id="PRO_0000215555" description="Pyruvate-flavodoxin oxidoreductase">
    <location>
        <begin position="1"/>
        <end position="1171"/>
    </location>
</feature>
<feature type="domain" description="4Fe-4S ferredoxin-type 1" evidence="2">
    <location>
        <begin position="682"/>
        <end position="711"/>
    </location>
</feature>
<feature type="domain" description="4Fe-4S ferredoxin-type 2" evidence="2">
    <location>
        <begin position="736"/>
        <end position="767"/>
    </location>
</feature>
<feature type="binding site" evidence="1">
    <location>
        <position position="691"/>
    </location>
    <ligand>
        <name>[4Fe-4S] cluster</name>
        <dbReference type="ChEBI" id="CHEBI:49883"/>
        <label>1</label>
    </ligand>
</feature>
<feature type="binding site" evidence="1">
    <location>
        <position position="694"/>
    </location>
    <ligand>
        <name>[4Fe-4S] cluster</name>
        <dbReference type="ChEBI" id="CHEBI:49883"/>
        <label>1</label>
    </ligand>
</feature>
<feature type="binding site" evidence="1">
    <location>
        <position position="697"/>
    </location>
    <ligand>
        <name>[4Fe-4S] cluster</name>
        <dbReference type="ChEBI" id="CHEBI:49883"/>
        <label>1</label>
    </ligand>
</feature>
<feature type="binding site" evidence="1">
    <location>
        <position position="701"/>
    </location>
    <ligand>
        <name>[4Fe-4S] cluster</name>
        <dbReference type="ChEBI" id="CHEBI:49883"/>
        <label>2</label>
    </ligand>
</feature>
<feature type="binding site" evidence="1">
    <location>
        <position position="745"/>
    </location>
    <ligand>
        <name>[4Fe-4S] cluster</name>
        <dbReference type="ChEBI" id="CHEBI:49883"/>
        <label>2</label>
    </ligand>
</feature>
<feature type="binding site" evidence="1">
    <location>
        <position position="748"/>
    </location>
    <ligand>
        <name>[4Fe-4S] cluster</name>
        <dbReference type="ChEBI" id="CHEBI:49883"/>
        <label>2</label>
    </ligand>
</feature>
<feature type="binding site" evidence="1">
    <location>
        <position position="751"/>
    </location>
    <ligand>
        <name>[4Fe-4S] cluster</name>
        <dbReference type="ChEBI" id="CHEBI:49883"/>
        <label>2</label>
    </ligand>
</feature>
<feature type="binding site" evidence="1">
    <location>
        <position position="755"/>
    </location>
    <ligand>
        <name>[4Fe-4S] cluster</name>
        <dbReference type="ChEBI" id="CHEBI:49883"/>
        <label>1</label>
    </ligand>
</feature>
<feature type="binding site" evidence="1">
    <location>
        <position position="811"/>
    </location>
    <ligand>
        <name>[4Fe-4S] cluster</name>
        <dbReference type="ChEBI" id="CHEBI:49883"/>
        <label>3</label>
    </ligand>
</feature>
<feature type="binding site" evidence="1">
    <location>
        <position position="814"/>
    </location>
    <ligand>
        <name>[4Fe-4S] cluster</name>
        <dbReference type="ChEBI" id="CHEBI:49883"/>
        <label>3</label>
    </ligand>
</feature>
<feature type="binding site" evidence="1">
    <location>
        <position position="839"/>
    </location>
    <ligand>
        <name>[4Fe-4S] cluster</name>
        <dbReference type="ChEBI" id="CHEBI:49883"/>
        <label>3</label>
    </ligand>
</feature>
<feature type="binding site" evidence="1">
    <location>
        <position position="1072"/>
    </location>
    <ligand>
        <name>[4Fe-4S] cluster</name>
        <dbReference type="ChEBI" id="CHEBI:49883"/>
        <label>3</label>
    </ligand>
</feature>
<feature type="sequence conflict" description="In Ref. 2; CAA31501." evidence="3" ref="2">
    <original>A</original>
    <variation>R</variation>
    <location>
        <position position="406"/>
    </location>
</feature>
<comment type="function">
    <text>Oxidoreductase required for the transfer of electrons from pyruvate to flavodoxin, which reduces nitrogenase.</text>
</comment>
<comment type="catalytic activity">
    <reaction>
        <text>oxidized [flavodoxin] + pyruvate + CoA + 2 H(+) = reduced [flavodoxin] + acetyl-CoA + CO2</text>
        <dbReference type="Rhea" id="RHEA:44140"/>
        <dbReference type="Rhea" id="RHEA-COMP:10622"/>
        <dbReference type="Rhea" id="RHEA-COMP:10623"/>
        <dbReference type="ChEBI" id="CHEBI:15361"/>
        <dbReference type="ChEBI" id="CHEBI:15378"/>
        <dbReference type="ChEBI" id="CHEBI:16526"/>
        <dbReference type="ChEBI" id="CHEBI:57287"/>
        <dbReference type="ChEBI" id="CHEBI:57288"/>
        <dbReference type="ChEBI" id="CHEBI:57618"/>
        <dbReference type="ChEBI" id="CHEBI:58210"/>
    </reaction>
</comment>
<comment type="cofactor">
    <cofactor evidence="1">
        <name>[4Fe-4S] cluster</name>
        <dbReference type="ChEBI" id="CHEBI:49883"/>
    </cofactor>
    <text evidence="1">Binds 3 [4Fe-4S] clusters per subunit.</text>
</comment>
<comment type="similarity">
    <text evidence="3">Belongs to the pyruvate:ferredoxin/flavodoxin oxidoreductase family.</text>
</comment>
<proteinExistence type="inferred from homology"/>
<accession>P03833</accession>
<accession>P09112</accession>
<sequence>MSGKMKTMDGNAAAAWISYAFTEVAAIYPITPSTPMAENVDEWAAQGKKNLFGQPVRLMEMQSEAGAAGAVHGALQAGALTTTYTASQGLLLMIPNMYKIAGELLPGVFHVSARALATNSLNIFGDHQDVMAVRQTGCAMLAENNVQQVMDLSAVAHLAAIKGRIPFVNFFDGFRTSHEIQKIEVLEYEQLATLLDRPALDSFRRNALHPDHPVIRGTAQNPDIYFQEREAGNRFYQALPDIVESYMTQISALTGREYHLFNYTGAADAERVIIAMGSVCDTVQEVVDTLNAAGEKVGLLSVHLFRPFSLAHFFAQLPKTVQRIAVLDRTKEPGAQAEPLCLDVKNAFYHHDDAPLIVGGRYALGGKDVLPNDIAAVFDNLNKPLPMDGFTLGIVDDVTFTSLPPAQQTLAVSHDGITACKFWGMGSDGTVGANKSAIKIIGDKTPLYAQAYFSYDSKKSGGITVSHLRFGDRPINSPYLIHRADFISCSQQSYVERYDLLDGLKPGGTFLLNCSWSDAELEQHLPVGFKRYLARENIHFYTLNAVDIARELGLGGRFNMLMQAAFFKLAAIIDPQTAADYLKQAVEKSYGSKGAAVIEMNQRAIELGMASLHQVTIPAHWATLDEPAAQASAMMPDFIRDILQPMNRQCGDQLPVSAFVGMEDGTFPSGTAAWEKRGIALEVPVWQPEGCTQCNQCAFICPHAAIRPALLNGEEHDAAPVGLLSKPAQGAKEYHYHLAISPLDCSGCGNCVDICPARGKALKMQSLDSQRQMAPVWDYALALTPKSNPFRKTTVKGSQFETPLLEFSGACAGCGETPYARLITQLFGDRMLIANATGCSSIWGASAPSIPYTTNHRGHGPAWANSLFEDNAEFGLGMMLGGQAVRQQIADDMTAALALPVSDELSDAMRQWLAKQDEGEGTRERADRLSERLAAEKEGVPLLEQLWQNRDYFVRRSQWIFGGDGWAYDIGFGGLDHVLASGEDVNILVFDTEVYSNTGGQSSKSTPVAAIAKFAAQGKRTRKKDLGMMAMSYGNVYVAQVAMGADKDQTLRAIAEAEAWPGPSLVIAYAACINHGLKAGMRCSQREAKRAVEAGYWHLWRYHPQREAEGKTPFMLDSEEPEESFRDFLLGEVRYASLHKTTPHLADALFSRTEEDARARFAQYRRLAGEE</sequence>
<organism>
    <name type="scientific">Klebsiella pneumoniae</name>
    <dbReference type="NCBI Taxonomy" id="573"/>
    <lineage>
        <taxon>Bacteria</taxon>
        <taxon>Pseudomonadati</taxon>
        <taxon>Pseudomonadota</taxon>
        <taxon>Gammaproteobacteria</taxon>
        <taxon>Enterobacterales</taxon>
        <taxon>Enterobacteriaceae</taxon>
        <taxon>Klebsiella/Raoultella group</taxon>
        <taxon>Klebsiella</taxon>
        <taxon>Klebsiella pneumoniae complex</taxon>
    </lineage>
</organism>